<comment type="function">
    <text evidence="1">Component of the cytochrome b6-f complex, which mediates electron transfer between photosystem II (PSII) and photosystem I (PSI), cyclic electron flow around PSI, and state transitions. PetL is important for photoautotrophic growth as well as for electron transfer efficiency and stability of the cytochrome b6-f complex.</text>
</comment>
<comment type="subunit">
    <text evidence="1">The 4 large subunits of the cytochrome b6-f complex are cytochrome b6, subunit IV (17 kDa polypeptide, PetD), cytochrome f and the Rieske protein, while the 4 small subunits are PetG, PetL, PetM and PetN. The complex functions as a dimer.</text>
</comment>
<comment type="subcellular location">
    <subcellularLocation>
        <location evidence="1">Plastid</location>
        <location evidence="1">Chloroplast thylakoid membrane</location>
        <topology evidence="1">Single-pass membrane protein</topology>
    </subcellularLocation>
</comment>
<comment type="similarity">
    <text evidence="1">Belongs to the PetL family.</text>
</comment>
<reference key="1">
    <citation type="journal article" date="2005" name="Mol. Biol. Evol.">
        <title>The chloroplast genome sequence of the green alga Pseudendoclonium akinetum (Ulvophyceae) reveals unusual structural features and new insights into the branching order of chlorophyte lineages.</title>
        <authorList>
            <person name="Pombert J.-F."/>
            <person name="Otis C."/>
            <person name="Lemieux C."/>
            <person name="Turmel M."/>
        </authorList>
    </citation>
    <scope>NUCLEOTIDE SEQUENCE [LARGE SCALE GENOMIC DNA]</scope>
    <source>
        <strain>UTEX 1912</strain>
    </source>
</reference>
<feature type="chain" id="PRO_0000233684" description="Cytochrome b6-f complex subunit 6">
    <location>
        <begin position="1"/>
        <end position="31"/>
    </location>
</feature>
<feature type="transmembrane region" description="Helical" evidence="1">
    <location>
        <begin position="4"/>
        <end position="24"/>
    </location>
</feature>
<gene>
    <name evidence="1" type="primary">petL</name>
</gene>
<evidence type="ECO:0000255" key="1">
    <source>
        <dbReference type="HAMAP-Rule" id="MF_00433"/>
    </source>
</evidence>
<proteinExistence type="inferred from homology"/>
<name>PETL_TUPAK</name>
<dbReference type="EMBL" id="AY835431">
    <property type="protein sequence ID" value="AAV80626.1"/>
    <property type="molecule type" value="Genomic_DNA"/>
</dbReference>
<dbReference type="RefSeq" id="YP_636202.1">
    <property type="nucleotide sequence ID" value="NC_008114.1"/>
</dbReference>
<dbReference type="SMR" id="Q3ZJ65"/>
<dbReference type="GeneID" id="4108806"/>
<dbReference type="GO" id="GO:0009535">
    <property type="term" value="C:chloroplast thylakoid membrane"/>
    <property type="evidence" value="ECO:0007669"/>
    <property type="project" value="UniProtKB-SubCell"/>
</dbReference>
<dbReference type="GO" id="GO:0009512">
    <property type="term" value="C:cytochrome b6f complex"/>
    <property type="evidence" value="ECO:0007669"/>
    <property type="project" value="InterPro"/>
</dbReference>
<dbReference type="GO" id="GO:0045158">
    <property type="term" value="F:electron transporter, transferring electrons within cytochrome b6/f complex of photosystem II activity"/>
    <property type="evidence" value="ECO:0007669"/>
    <property type="project" value="UniProtKB-UniRule"/>
</dbReference>
<dbReference type="GO" id="GO:0015979">
    <property type="term" value="P:photosynthesis"/>
    <property type="evidence" value="ECO:0007669"/>
    <property type="project" value="UniProtKB-KW"/>
</dbReference>
<dbReference type="HAMAP" id="MF_00433">
    <property type="entry name" value="Cytb6_f_PetL"/>
    <property type="match status" value="1"/>
</dbReference>
<dbReference type="InterPro" id="IPR007802">
    <property type="entry name" value="Cyt_b6/f_cplx_su6"/>
</dbReference>
<organism>
    <name type="scientific">Tupiella akineta</name>
    <name type="common">Green alga</name>
    <name type="synonym">Pseudendoclonium akinetum</name>
    <dbReference type="NCBI Taxonomy" id="160070"/>
    <lineage>
        <taxon>Eukaryota</taxon>
        <taxon>Viridiplantae</taxon>
        <taxon>Chlorophyta</taxon>
        <taxon>Ulvophyceae</taxon>
        <taxon>OUU clade</taxon>
        <taxon>Ulotrichales</taxon>
        <taxon>Tupiellaceae</taxon>
        <taxon>Tupiella</taxon>
    </lineage>
</organism>
<accession>Q3ZJ65</accession>
<geneLocation type="chloroplast"/>
<protein>
    <recommendedName>
        <fullName evidence="1">Cytochrome b6-f complex subunit 6</fullName>
    </recommendedName>
    <alternativeName>
        <fullName evidence="1">Cytochrome b6-f complex subunit PetL</fullName>
    </alternativeName>
    <alternativeName>
        <fullName evidence="1">Cytochrome b6-f complex subunit VI</fullName>
    </alternativeName>
</protein>
<keyword id="KW-0150">Chloroplast</keyword>
<keyword id="KW-0249">Electron transport</keyword>
<keyword id="KW-0472">Membrane</keyword>
<keyword id="KW-0602">Photosynthesis</keyword>
<keyword id="KW-0934">Plastid</keyword>
<keyword id="KW-0793">Thylakoid</keyword>
<keyword id="KW-0812">Transmembrane</keyword>
<keyword id="KW-1133">Transmembrane helix</keyword>
<keyword id="KW-0813">Transport</keyword>
<sequence>MVTLISYISLLAGFVIIASVFYLALVKIKLI</sequence>